<evidence type="ECO:0000250" key="1"/>
<evidence type="ECO:0000255" key="2"/>
<evidence type="ECO:0000255" key="3">
    <source>
        <dbReference type="PROSITE-ProRule" id="PRU00114"/>
    </source>
</evidence>
<evidence type="ECO:0000305" key="4"/>
<proteinExistence type="evidence at transcript level"/>
<accession>P33617</accession>
<reference key="1">
    <citation type="journal article" date="1993" name="Immunogenetics">
        <title>Characterization of the rhesus macaque (Macaca mulatta) equivalent of HLA-F.</title>
        <authorList>
            <person name="Otting N."/>
            <person name="Bontrop R.E."/>
        </authorList>
    </citation>
    <scope>NUCLEOTIDE SEQUENCE [MRNA]</scope>
</reference>
<reference key="2">
    <citation type="submission" date="2007-11" db="EMBL/GenBank/DDBJ databases">
        <authorList>
            <person name="Otting N."/>
        </authorList>
    </citation>
    <scope>SEQUENCE REVISION TO 39; 49; 212; 217; 234; 333 AND 346-347</scope>
</reference>
<feature type="signal peptide" evidence="1">
    <location>
        <begin position="1"/>
        <end position="21"/>
    </location>
</feature>
<feature type="chain" id="PRO_0000018885" description="Mamu class I histocompatibility antigen, alpha chain F">
    <location>
        <begin position="22"/>
        <end position="348"/>
    </location>
</feature>
<feature type="topological domain" description="Extracellular" evidence="2">
    <location>
        <begin position="22"/>
        <end position="307"/>
    </location>
</feature>
<feature type="transmembrane region" description="Helical" evidence="2">
    <location>
        <begin position="308"/>
        <end position="331"/>
    </location>
</feature>
<feature type="topological domain" description="Cytoplasmic" evidence="2">
    <location>
        <begin position="332"/>
        <end position="348"/>
    </location>
</feature>
<feature type="domain" description="Ig-like C1-type">
    <location>
        <begin position="208"/>
        <end position="296"/>
    </location>
</feature>
<feature type="region of interest" description="Alpha-1">
    <location>
        <begin position="22"/>
        <end position="113"/>
    </location>
</feature>
<feature type="region of interest" description="Alpha-2">
    <location>
        <begin position="114"/>
        <end position="205"/>
    </location>
</feature>
<feature type="region of interest" description="Alpha-3">
    <location>
        <begin position="206"/>
        <end position="297"/>
    </location>
</feature>
<feature type="region of interest" description="Connecting peptide">
    <location>
        <begin position="298"/>
        <end position="307"/>
    </location>
</feature>
<feature type="glycosylation site" description="N-linked (GlcNAc...) asparagine" evidence="2">
    <location>
        <position position="109"/>
    </location>
</feature>
<feature type="disulfide bond" evidence="3">
    <location>
        <begin position="124"/>
        <end position="187"/>
    </location>
</feature>
<feature type="disulfide bond" evidence="3">
    <location>
        <begin position="226"/>
        <end position="282"/>
    </location>
</feature>
<gene>
    <name type="primary">Mamu-F</name>
    <name type="synonym">HLAF</name>
</gene>
<organism>
    <name type="scientific">Macaca mulatta</name>
    <name type="common">Rhesus macaque</name>
    <dbReference type="NCBI Taxonomy" id="9544"/>
    <lineage>
        <taxon>Eukaryota</taxon>
        <taxon>Metazoa</taxon>
        <taxon>Chordata</taxon>
        <taxon>Craniata</taxon>
        <taxon>Vertebrata</taxon>
        <taxon>Euteleostomi</taxon>
        <taxon>Mammalia</taxon>
        <taxon>Eutheria</taxon>
        <taxon>Euarchontoglires</taxon>
        <taxon>Primates</taxon>
        <taxon>Haplorrhini</taxon>
        <taxon>Catarrhini</taxon>
        <taxon>Cercopithecidae</taxon>
        <taxon>Cercopithecinae</taxon>
        <taxon>Macaca</taxon>
    </lineage>
</organism>
<dbReference type="EMBL" id="Z21819">
    <property type="protein sequence ID" value="CAA79885.2"/>
    <property type="molecule type" value="mRNA"/>
</dbReference>
<dbReference type="PIR" id="S29990">
    <property type="entry name" value="S29990"/>
</dbReference>
<dbReference type="RefSeq" id="NP_001036235.2">
    <property type="nucleotide sequence ID" value="NM_001042770.2"/>
</dbReference>
<dbReference type="SMR" id="P33617"/>
<dbReference type="FunCoup" id="P33617">
    <property type="interactions" value="733"/>
</dbReference>
<dbReference type="STRING" id="9544.ENSMMUP00000011541"/>
<dbReference type="GlyCosmos" id="P33617">
    <property type="glycosylation" value="1 site, No reported glycans"/>
</dbReference>
<dbReference type="PaxDb" id="9544-ENSMMUP00000011541"/>
<dbReference type="GeneID" id="709076"/>
<dbReference type="KEGG" id="mcc:709076"/>
<dbReference type="CTD" id="709076"/>
<dbReference type="eggNOG" id="ENOG502RQEK">
    <property type="taxonomic scope" value="Eukaryota"/>
</dbReference>
<dbReference type="InParanoid" id="P33617"/>
<dbReference type="OrthoDB" id="9482151at2759"/>
<dbReference type="Proteomes" id="UP000006718">
    <property type="component" value="Unassembled WGS sequence"/>
</dbReference>
<dbReference type="GO" id="GO:0009897">
    <property type="term" value="C:external side of plasma membrane"/>
    <property type="evidence" value="ECO:0000318"/>
    <property type="project" value="GO_Central"/>
</dbReference>
<dbReference type="GO" id="GO:0005615">
    <property type="term" value="C:extracellular space"/>
    <property type="evidence" value="ECO:0000318"/>
    <property type="project" value="GO_Central"/>
</dbReference>
<dbReference type="GO" id="GO:0042612">
    <property type="term" value="C:MHC class I protein complex"/>
    <property type="evidence" value="ECO:0007669"/>
    <property type="project" value="UniProtKB-KW"/>
</dbReference>
<dbReference type="GO" id="GO:0042605">
    <property type="term" value="F:peptide antigen binding"/>
    <property type="evidence" value="ECO:0000318"/>
    <property type="project" value="GO_Central"/>
</dbReference>
<dbReference type="GO" id="GO:0005102">
    <property type="term" value="F:signaling receptor binding"/>
    <property type="evidence" value="ECO:0000318"/>
    <property type="project" value="GO_Central"/>
</dbReference>
<dbReference type="GO" id="GO:0002486">
    <property type="term" value="P:antigen processing and presentation of endogenous peptide antigen via MHC class I via ER pathway, TAP-independent"/>
    <property type="evidence" value="ECO:0000318"/>
    <property type="project" value="GO_Central"/>
</dbReference>
<dbReference type="GO" id="GO:0002476">
    <property type="term" value="P:antigen processing and presentation of endogenous peptide antigen via MHC class Ib"/>
    <property type="evidence" value="ECO:0000318"/>
    <property type="project" value="GO_Central"/>
</dbReference>
<dbReference type="GO" id="GO:0006955">
    <property type="term" value="P:immune response"/>
    <property type="evidence" value="ECO:0000318"/>
    <property type="project" value="GO_Central"/>
</dbReference>
<dbReference type="GO" id="GO:0001916">
    <property type="term" value="P:positive regulation of T cell mediated cytotoxicity"/>
    <property type="evidence" value="ECO:0000318"/>
    <property type="project" value="GO_Central"/>
</dbReference>
<dbReference type="CDD" id="cd21023">
    <property type="entry name" value="IgC1_MHC_Ia_HLA-F"/>
    <property type="match status" value="1"/>
</dbReference>
<dbReference type="FunFam" id="2.60.40.10:FF:000014">
    <property type="entry name" value="H-2 class I histocompatibility antigen, alpha chain"/>
    <property type="match status" value="1"/>
</dbReference>
<dbReference type="FunFam" id="3.30.500.10:FF:000001">
    <property type="entry name" value="H-2 class I histocompatibility antigen, alpha chain"/>
    <property type="match status" value="1"/>
</dbReference>
<dbReference type="Gene3D" id="2.60.40.10">
    <property type="entry name" value="Immunoglobulins"/>
    <property type="match status" value="1"/>
</dbReference>
<dbReference type="Gene3D" id="3.30.500.10">
    <property type="entry name" value="MHC class I-like antigen recognition-like"/>
    <property type="match status" value="1"/>
</dbReference>
<dbReference type="InterPro" id="IPR007110">
    <property type="entry name" value="Ig-like_dom"/>
</dbReference>
<dbReference type="InterPro" id="IPR036179">
    <property type="entry name" value="Ig-like_dom_sf"/>
</dbReference>
<dbReference type="InterPro" id="IPR013783">
    <property type="entry name" value="Ig-like_fold"/>
</dbReference>
<dbReference type="InterPro" id="IPR003006">
    <property type="entry name" value="Ig/MHC_CS"/>
</dbReference>
<dbReference type="InterPro" id="IPR003597">
    <property type="entry name" value="Ig_C1-set"/>
</dbReference>
<dbReference type="InterPro" id="IPR050208">
    <property type="entry name" value="MHC_class-I_related"/>
</dbReference>
<dbReference type="InterPro" id="IPR011161">
    <property type="entry name" value="MHC_I-like_Ag-recog"/>
</dbReference>
<dbReference type="InterPro" id="IPR037055">
    <property type="entry name" value="MHC_I-like_Ag-recog_sf"/>
</dbReference>
<dbReference type="InterPro" id="IPR011162">
    <property type="entry name" value="MHC_I/II-like_Ag-recog"/>
</dbReference>
<dbReference type="InterPro" id="IPR001039">
    <property type="entry name" value="MHC_I_a_a1/a2"/>
</dbReference>
<dbReference type="PANTHER" id="PTHR16675:SF187">
    <property type="entry name" value="HLA CLASS I HISTOCOMPATIBILITY ANTIGEN, ALPHA CHAIN F"/>
    <property type="match status" value="1"/>
</dbReference>
<dbReference type="PANTHER" id="PTHR16675">
    <property type="entry name" value="MHC CLASS I-RELATED"/>
    <property type="match status" value="1"/>
</dbReference>
<dbReference type="Pfam" id="PF07654">
    <property type="entry name" value="C1-set"/>
    <property type="match status" value="1"/>
</dbReference>
<dbReference type="Pfam" id="PF00129">
    <property type="entry name" value="MHC_I"/>
    <property type="match status" value="1"/>
</dbReference>
<dbReference type="PRINTS" id="PR01638">
    <property type="entry name" value="MHCCLASSI"/>
</dbReference>
<dbReference type="SMART" id="SM00407">
    <property type="entry name" value="IGc1"/>
    <property type="match status" value="1"/>
</dbReference>
<dbReference type="SUPFAM" id="SSF48726">
    <property type="entry name" value="Immunoglobulin"/>
    <property type="match status" value="1"/>
</dbReference>
<dbReference type="SUPFAM" id="SSF54452">
    <property type="entry name" value="MHC antigen-recognition domain"/>
    <property type="match status" value="1"/>
</dbReference>
<dbReference type="PROSITE" id="PS50835">
    <property type="entry name" value="IG_LIKE"/>
    <property type="match status" value="1"/>
</dbReference>
<dbReference type="PROSITE" id="PS00290">
    <property type="entry name" value="IG_MHC"/>
    <property type="match status" value="1"/>
</dbReference>
<protein>
    <recommendedName>
        <fullName>Mamu class I histocompatibility antigen, alpha chain F</fullName>
    </recommendedName>
    <alternativeName>
        <fullName>Leukocyte antigen F</fullName>
    </alternativeName>
    <alternativeName>
        <fullName>MHC class I antigen F</fullName>
    </alternativeName>
</protein>
<keyword id="KW-1015">Disulfide bond</keyword>
<keyword id="KW-0325">Glycoprotein</keyword>
<keyword id="KW-0391">Immunity</keyword>
<keyword id="KW-0472">Membrane</keyword>
<keyword id="KW-0490">MHC I</keyword>
<keyword id="KW-1185">Reference proteome</keyword>
<keyword id="KW-0732">Signal</keyword>
<keyword id="KW-0812">Transmembrane</keyword>
<keyword id="KW-1133">Transmembrane helix</keyword>
<sequence length="348" mass="39481">MAPRTLLLVLSGALALTETWAGSHSLRYFSTAVSRPGRREPQYRYIAVEYVDDTQFLRFDSDAAIPRMEPRAPWVEQEGPQYWERTTGYAKANARTDRVALRKLLLRYNQSEAGSHTLQGMNGCDMGPDGRLLRGYHQHAYDGKDYISLNEDLRSWTAADTVARITQRFYEAEEYAEEFRTYLEGECLELLRRYLENGKETLQRADPPKAHVAHHPISDREATLRCWALGFYPAEITLTWQRDGEEQTQDTELVETRPAGDGTFQKWAAVVVPSGEEQRYTCHVQHEGLPQPLTLRWESSSQPTIPIVGIVAGLAVLAVVVTGAVVAAVMWRRKSSDRNRGSYSQPTM</sequence>
<comment type="function">
    <text>Involved in the presentation of foreign antigens to the immune system.</text>
</comment>
<comment type="subunit">
    <text>Heterodimer of an alpha chain and a beta chain (beta-2-microglobulin).</text>
</comment>
<comment type="subcellular location">
    <subcellularLocation>
        <location>Membrane</location>
        <topology>Single-pass type I membrane protein</topology>
    </subcellularLocation>
</comment>
<comment type="similarity">
    <text evidence="4">Belongs to the MHC class I family.</text>
</comment>
<name>HLAF_MACMU</name>